<keyword id="KW-0106">Calcium</keyword>
<keyword id="KW-0165">Cleavage on pair of basic residues</keyword>
<keyword id="KW-0963">Cytoplasm</keyword>
<keyword id="KW-0372">Hormone</keyword>
<keyword id="KW-0539">Nucleus</keyword>
<keyword id="KW-1185">Reference proteome</keyword>
<keyword id="KW-0964">Secreted</keyword>
<keyword id="KW-0732">Signal</keyword>
<reference key="1">
    <citation type="journal article" date="1990" name="Nucleic Acids Res.">
        <title>Nucleotide sequence of a parathyroid hormone-related peptide expressed by the 10 day chicken embryo.</title>
        <authorList>
            <person name="Thiede M.A."/>
            <person name="Rutledge S.J."/>
        </authorList>
    </citation>
    <scope>NUCLEOTIDE SEQUENCE [MRNA]</scope>
</reference>
<reference key="2">
    <citation type="journal article" date="1999" name="Biochim. Biophys. Acta">
        <title>Structure study of osteostatin PTHrP[Thr107](107-139).</title>
        <authorList>
            <person name="Cuthbertson R.M."/>
            <person name="Kemp B.E."/>
            <person name="Barden J.A."/>
        </authorList>
    </citation>
    <scope>STRUCTURE BY NMR OF 145-176</scope>
</reference>
<accession>P17251</accession>
<sequence>MMFTKLFQQWSFAVFLLSYSVPSYGRSVEGISRRLKRAVSEHQLLHDKGKSIQDLRRRIFLQNLIEGVNTAEIRATSEVSPNPKPATNTKNYPVRFGSEDEGRYLTQETNKSQTYKEQPLKVSGKKKKAKPGKRKEQEKKKRRARSAWLNSGMYGSNVTESPVLDNSVTTHNHILR</sequence>
<gene>
    <name type="primary">PTHLH</name>
</gene>
<proteinExistence type="evidence at protein level"/>
<evidence type="ECO:0000250" key="1">
    <source>
        <dbReference type="UniProtKB" id="P12272"/>
    </source>
</evidence>
<evidence type="ECO:0000250" key="2">
    <source>
        <dbReference type="UniProtKB" id="P22858"/>
    </source>
</evidence>
<evidence type="ECO:0000255" key="3"/>
<evidence type="ECO:0000256" key="4">
    <source>
        <dbReference type="SAM" id="MobiDB-lite"/>
    </source>
</evidence>
<evidence type="ECO:0000305" key="5"/>
<evidence type="ECO:0000305" key="6">
    <source>
    </source>
</evidence>
<feature type="signal peptide" evidence="3">
    <location>
        <begin position="1"/>
        <end position="25"/>
    </location>
</feature>
<feature type="propeptide" id="PRO_0000023240" evidence="1">
    <location>
        <begin position="26"/>
        <end position="37"/>
    </location>
</feature>
<feature type="chain" id="PRO_0000023241" description="Parathyroid hormone-related protein">
    <location>
        <begin position="38"/>
        <end position="176"/>
    </location>
</feature>
<feature type="peptide" id="PRO_0000023242" description="Osteostatin" evidence="6">
    <location>
        <begin position="145"/>
        <end position="176"/>
    </location>
</feature>
<feature type="region of interest" description="Important for receptor binding" evidence="1">
    <location>
        <begin position="58"/>
        <end position="69"/>
    </location>
</feature>
<feature type="region of interest" description="Disordered" evidence="4">
    <location>
        <begin position="76"/>
        <end position="157"/>
    </location>
</feature>
<feature type="short sequence motif" description="Nuclear localization signal" evidence="1">
    <location>
        <begin position="109"/>
        <end position="130"/>
    </location>
</feature>
<feature type="compositionally biased region" description="Polar residues" evidence="4">
    <location>
        <begin position="77"/>
        <end position="91"/>
    </location>
</feature>
<feature type="compositionally biased region" description="Polar residues" evidence="4">
    <location>
        <begin position="106"/>
        <end position="116"/>
    </location>
</feature>
<feature type="compositionally biased region" description="Basic residues" evidence="4">
    <location>
        <begin position="123"/>
        <end position="133"/>
    </location>
</feature>
<organism>
    <name type="scientific">Gallus gallus</name>
    <name type="common">Chicken</name>
    <dbReference type="NCBI Taxonomy" id="9031"/>
    <lineage>
        <taxon>Eukaryota</taxon>
        <taxon>Metazoa</taxon>
        <taxon>Chordata</taxon>
        <taxon>Craniata</taxon>
        <taxon>Vertebrata</taxon>
        <taxon>Euteleostomi</taxon>
        <taxon>Archelosauria</taxon>
        <taxon>Archosauria</taxon>
        <taxon>Dinosauria</taxon>
        <taxon>Saurischia</taxon>
        <taxon>Theropoda</taxon>
        <taxon>Coelurosauria</taxon>
        <taxon>Aves</taxon>
        <taxon>Neognathae</taxon>
        <taxon>Galloanserae</taxon>
        <taxon>Galliformes</taxon>
        <taxon>Phasianidae</taxon>
        <taxon>Phasianinae</taxon>
        <taxon>Gallus</taxon>
    </lineage>
</organism>
<protein>
    <recommendedName>
        <fullName>Parathyroid hormone-related protein</fullName>
        <shortName>PTH-rP</shortName>
        <shortName>PTHrP</shortName>
    </recommendedName>
    <component>
        <recommendedName>
            <fullName>Osteostatin</fullName>
        </recommendedName>
        <alternativeName>
            <fullName>PTHrP[107-139]</fullName>
        </alternativeName>
    </component>
</protein>
<comment type="function">
    <text evidence="1 2">Neuroendocrine peptide which is a critical regulator of cellular and organ growth, development, migration, differentiation and survival and of epithelial calcium ion transport (By similarity). Acts by binding to its receptor, PTH1R, activating G protein-coupled receptor signaling (By similarity). Regulates endochondral bone development and epithelial-mesenchymal interactions during the formation of the mammary glands and teeth (By similarity). Required for skeletal homeostasis (By similarity).</text>
</comment>
<comment type="function">
    <molecule>Osteostatin</molecule>
    <text evidence="1">Potent inhibitor of osteoclastic bone resorption.</text>
</comment>
<comment type="subcellular location">
    <subcellularLocation>
        <location evidence="1">Secreted</location>
    </subcellularLocation>
    <subcellularLocation>
        <location evidence="1">Cytoplasm</location>
    </subcellularLocation>
    <subcellularLocation>
        <location evidence="1">Nucleus</location>
    </subcellularLocation>
</comment>
<comment type="similarity">
    <text evidence="5">Belongs to the parathyroid hormone family.</text>
</comment>
<dbReference type="EMBL" id="X52131">
    <property type="protein sequence ID" value="CAA36376.1"/>
    <property type="molecule type" value="mRNA"/>
</dbReference>
<dbReference type="PIR" id="S10202">
    <property type="entry name" value="S10202"/>
</dbReference>
<dbReference type="RefSeq" id="NP_990669.3">
    <property type="nucleotide sequence ID" value="NM_205338.3"/>
</dbReference>
<dbReference type="SMR" id="P17251"/>
<dbReference type="FunCoup" id="P17251">
    <property type="interactions" value="33"/>
</dbReference>
<dbReference type="STRING" id="9031.ENSGALP00000069044"/>
<dbReference type="PaxDb" id="9031-ENSGALP00000029396"/>
<dbReference type="Ensembl" id="ENSGALT00010052512.1">
    <property type="protein sequence ID" value="ENSGALP00010031419.1"/>
    <property type="gene ID" value="ENSGALG00010021622.1"/>
</dbReference>
<dbReference type="GeneID" id="396281"/>
<dbReference type="CTD" id="5744"/>
<dbReference type="VEuPathDB" id="HostDB:geneid_396281"/>
<dbReference type="eggNOG" id="ENOG502S3J9">
    <property type="taxonomic scope" value="Eukaryota"/>
</dbReference>
<dbReference type="GeneTree" id="ENSGT00390000004933"/>
<dbReference type="HOGENOM" id="CLU_095189_0_0_1"/>
<dbReference type="InParanoid" id="P17251"/>
<dbReference type="OMA" id="TTHDHNL"/>
<dbReference type="OrthoDB" id="9892514at2759"/>
<dbReference type="Reactome" id="R-GGA-373080">
    <property type="pathway name" value="Class B/2 (Secretin family receptors)"/>
</dbReference>
<dbReference type="Reactome" id="R-GGA-418555">
    <property type="pathway name" value="G alpha (s) signalling events"/>
</dbReference>
<dbReference type="PRO" id="PR:P17251"/>
<dbReference type="Proteomes" id="UP000000539">
    <property type="component" value="Chromosome 1"/>
</dbReference>
<dbReference type="Bgee" id="ENSGALG00000017295">
    <property type="expression patterns" value="Expressed in lung and 7 other cell types or tissues"/>
</dbReference>
<dbReference type="GO" id="GO:0005737">
    <property type="term" value="C:cytoplasm"/>
    <property type="evidence" value="ECO:0007669"/>
    <property type="project" value="UniProtKB-SubCell"/>
</dbReference>
<dbReference type="GO" id="GO:0005576">
    <property type="term" value="C:extracellular region"/>
    <property type="evidence" value="ECO:0007669"/>
    <property type="project" value="UniProtKB-SubCell"/>
</dbReference>
<dbReference type="GO" id="GO:0005634">
    <property type="term" value="C:nucleus"/>
    <property type="evidence" value="ECO:0007669"/>
    <property type="project" value="UniProtKB-SubCell"/>
</dbReference>
<dbReference type="GO" id="GO:0005179">
    <property type="term" value="F:hormone activity"/>
    <property type="evidence" value="ECO:0000318"/>
    <property type="project" value="GO_Central"/>
</dbReference>
<dbReference type="GO" id="GO:0051428">
    <property type="term" value="F:peptide hormone receptor binding"/>
    <property type="evidence" value="ECO:0000318"/>
    <property type="project" value="GO_Central"/>
</dbReference>
<dbReference type="GO" id="GO:0007189">
    <property type="term" value="P:adenylate cyclase-activating G protein-coupled receptor signaling pathway"/>
    <property type="evidence" value="ECO:0000318"/>
    <property type="project" value="GO_Central"/>
</dbReference>
<dbReference type="GO" id="GO:0030282">
    <property type="term" value="P:bone mineralization"/>
    <property type="evidence" value="ECO:0007669"/>
    <property type="project" value="InterPro"/>
</dbReference>
<dbReference type="GO" id="GO:1903042">
    <property type="term" value="P:negative regulation of chondrocyte hypertrophy"/>
    <property type="evidence" value="ECO:0000315"/>
    <property type="project" value="AgBase"/>
</dbReference>
<dbReference type="GO" id="GO:0002076">
    <property type="term" value="P:osteoblast development"/>
    <property type="evidence" value="ECO:0000318"/>
    <property type="project" value="GO_Central"/>
</dbReference>
<dbReference type="GO" id="GO:0032330">
    <property type="term" value="P:regulation of chondrocyte differentiation"/>
    <property type="evidence" value="ECO:0000318"/>
    <property type="project" value="GO_Central"/>
</dbReference>
<dbReference type="GO" id="GO:1902733">
    <property type="term" value="P:regulation of growth plate cartilage chondrocyte differentiation"/>
    <property type="evidence" value="ECO:0000315"/>
    <property type="project" value="AgBase"/>
</dbReference>
<dbReference type="GO" id="GO:0003420">
    <property type="term" value="P:regulation of growth plate cartilage chondrocyte proliferation"/>
    <property type="evidence" value="ECO:0000315"/>
    <property type="project" value="AgBase"/>
</dbReference>
<dbReference type="InterPro" id="IPR003626">
    <property type="entry name" value="PTH-rel"/>
</dbReference>
<dbReference type="InterPro" id="IPR001415">
    <property type="entry name" value="PTH/PTH-rel"/>
</dbReference>
<dbReference type="PANTHER" id="PTHR17223">
    <property type="entry name" value="PARATHYROID HORMONE-RELATED"/>
    <property type="match status" value="1"/>
</dbReference>
<dbReference type="PANTHER" id="PTHR17223:SF0">
    <property type="entry name" value="PARATHYROID HORMONE-RELATED PROTEIN"/>
    <property type="match status" value="1"/>
</dbReference>
<dbReference type="Pfam" id="PF01279">
    <property type="entry name" value="Parathyroid"/>
    <property type="match status" value="1"/>
</dbReference>
<dbReference type="SMART" id="SM00087">
    <property type="entry name" value="PTH"/>
    <property type="match status" value="1"/>
</dbReference>
<dbReference type="PROSITE" id="PS00335">
    <property type="entry name" value="PARATHYROID"/>
    <property type="match status" value="1"/>
</dbReference>
<name>PTHR_CHICK</name>